<sequence length="269" mass="30169">MESSKDTQHGDALESKSCLANRTSSRQNKRTSLSSSDGTGPRVTESLGLPRVLTPSDTAAELGQKTSSSSSSSSSSAQSNRSSKVSLPEIPKEKYPEEFSLLNSQTEDGQRPEWTFYPRFSSNIHTYHIGKQCFFNGVFRGNRRSVAERTVDNSLGKKKYDIDPRNGIPKLTPGDNPYMFPEQSKEFFKAGATLPPVNFSLGPYEKKFDTFIPLEPLPKIPNLPFWEKEKANNLKNEIKEVEELDNWQVPMPFLHGFFSTGASNFSRQQ</sequence>
<reference key="1">
    <citation type="submission" date="2003-07" db="EMBL/GenBank/DDBJ databases">
        <title>A novel protein interacting with Dvl2.</title>
        <authorList>
            <person name="Ng S.S."/>
            <person name="Han L."/>
            <person name="Zhang X."/>
            <person name="He X."/>
            <person name="Chang Z."/>
        </authorList>
    </citation>
    <scope>NUCLEOTIDE SEQUENCE [MRNA] (ISOFORM 2)</scope>
    <source>
        <strain>BALB/cJ</strain>
        <tissue>Embryo</tissue>
    </source>
</reference>
<reference key="2">
    <citation type="journal article" date="2005" name="Science">
        <title>The transcriptional landscape of the mammalian genome.</title>
        <authorList>
            <person name="Carninci P."/>
            <person name="Kasukawa T."/>
            <person name="Katayama S."/>
            <person name="Gough J."/>
            <person name="Frith M.C."/>
            <person name="Maeda N."/>
            <person name="Oyama R."/>
            <person name="Ravasi T."/>
            <person name="Lenhard B."/>
            <person name="Wells C."/>
            <person name="Kodzius R."/>
            <person name="Shimokawa K."/>
            <person name="Bajic V.B."/>
            <person name="Brenner S.E."/>
            <person name="Batalov S."/>
            <person name="Forrest A.R."/>
            <person name="Zavolan M."/>
            <person name="Davis M.J."/>
            <person name="Wilming L.G."/>
            <person name="Aidinis V."/>
            <person name="Allen J.E."/>
            <person name="Ambesi-Impiombato A."/>
            <person name="Apweiler R."/>
            <person name="Aturaliya R.N."/>
            <person name="Bailey T.L."/>
            <person name="Bansal M."/>
            <person name="Baxter L."/>
            <person name="Beisel K.W."/>
            <person name="Bersano T."/>
            <person name="Bono H."/>
            <person name="Chalk A.M."/>
            <person name="Chiu K.P."/>
            <person name="Choudhary V."/>
            <person name="Christoffels A."/>
            <person name="Clutterbuck D.R."/>
            <person name="Crowe M.L."/>
            <person name="Dalla E."/>
            <person name="Dalrymple B.P."/>
            <person name="de Bono B."/>
            <person name="Della Gatta G."/>
            <person name="di Bernardo D."/>
            <person name="Down T."/>
            <person name="Engstrom P."/>
            <person name="Fagiolini M."/>
            <person name="Faulkner G."/>
            <person name="Fletcher C.F."/>
            <person name="Fukushima T."/>
            <person name="Furuno M."/>
            <person name="Futaki S."/>
            <person name="Gariboldi M."/>
            <person name="Georgii-Hemming P."/>
            <person name="Gingeras T.R."/>
            <person name="Gojobori T."/>
            <person name="Green R.E."/>
            <person name="Gustincich S."/>
            <person name="Harbers M."/>
            <person name="Hayashi Y."/>
            <person name="Hensch T.K."/>
            <person name="Hirokawa N."/>
            <person name="Hill D."/>
            <person name="Huminiecki L."/>
            <person name="Iacono M."/>
            <person name="Ikeo K."/>
            <person name="Iwama A."/>
            <person name="Ishikawa T."/>
            <person name="Jakt M."/>
            <person name="Kanapin A."/>
            <person name="Katoh M."/>
            <person name="Kawasawa Y."/>
            <person name="Kelso J."/>
            <person name="Kitamura H."/>
            <person name="Kitano H."/>
            <person name="Kollias G."/>
            <person name="Krishnan S.P."/>
            <person name="Kruger A."/>
            <person name="Kummerfeld S.K."/>
            <person name="Kurochkin I.V."/>
            <person name="Lareau L.F."/>
            <person name="Lazarevic D."/>
            <person name="Lipovich L."/>
            <person name="Liu J."/>
            <person name="Liuni S."/>
            <person name="McWilliam S."/>
            <person name="Madan Babu M."/>
            <person name="Madera M."/>
            <person name="Marchionni L."/>
            <person name="Matsuda H."/>
            <person name="Matsuzawa S."/>
            <person name="Miki H."/>
            <person name="Mignone F."/>
            <person name="Miyake S."/>
            <person name="Morris K."/>
            <person name="Mottagui-Tabar S."/>
            <person name="Mulder N."/>
            <person name="Nakano N."/>
            <person name="Nakauchi H."/>
            <person name="Ng P."/>
            <person name="Nilsson R."/>
            <person name="Nishiguchi S."/>
            <person name="Nishikawa S."/>
            <person name="Nori F."/>
            <person name="Ohara O."/>
            <person name="Okazaki Y."/>
            <person name="Orlando V."/>
            <person name="Pang K.C."/>
            <person name="Pavan W.J."/>
            <person name="Pavesi G."/>
            <person name="Pesole G."/>
            <person name="Petrovsky N."/>
            <person name="Piazza S."/>
            <person name="Reed J."/>
            <person name="Reid J.F."/>
            <person name="Ring B.Z."/>
            <person name="Ringwald M."/>
            <person name="Rost B."/>
            <person name="Ruan Y."/>
            <person name="Salzberg S.L."/>
            <person name="Sandelin A."/>
            <person name="Schneider C."/>
            <person name="Schoenbach C."/>
            <person name="Sekiguchi K."/>
            <person name="Semple C.A."/>
            <person name="Seno S."/>
            <person name="Sessa L."/>
            <person name="Sheng Y."/>
            <person name="Shibata Y."/>
            <person name="Shimada H."/>
            <person name="Shimada K."/>
            <person name="Silva D."/>
            <person name="Sinclair B."/>
            <person name="Sperling S."/>
            <person name="Stupka E."/>
            <person name="Sugiura K."/>
            <person name="Sultana R."/>
            <person name="Takenaka Y."/>
            <person name="Taki K."/>
            <person name="Tammoja K."/>
            <person name="Tan S.L."/>
            <person name="Tang S."/>
            <person name="Taylor M.S."/>
            <person name="Tegner J."/>
            <person name="Teichmann S.A."/>
            <person name="Ueda H.R."/>
            <person name="van Nimwegen E."/>
            <person name="Verardo R."/>
            <person name="Wei C.L."/>
            <person name="Yagi K."/>
            <person name="Yamanishi H."/>
            <person name="Zabarovsky E."/>
            <person name="Zhu S."/>
            <person name="Zimmer A."/>
            <person name="Hide W."/>
            <person name="Bult C."/>
            <person name="Grimmond S.M."/>
            <person name="Teasdale R.D."/>
            <person name="Liu E.T."/>
            <person name="Brusic V."/>
            <person name="Quackenbush J."/>
            <person name="Wahlestedt C."/>
            <person name="Mattick J.S."/>
            <person name="Hume D.A."/>
            <person name="Kai C."/>
            <person name="Sasaki D."/>
            <person name="Tomaru Y."/>
            <person name="Fukuda S."/>
            <person name="Kanamori-Katayama M."/>
            <person name="Suzuki M."/>
            <person name="Aoki J."/>
            <person name="Arakawa T."/>
            <person name="Iida J."/>
            <person name="Imamura K."/>
            <person name="Itoh M."/>
            <person name="Kato T."/>
            <person name="Kawaji H."/>
            <person name="Kawagashira N."/>
            <person name="Kawashima T."/>
            <person name="Kojima M."/>
            <person name="Kondo S."/>
            <person name="Konno H."/>
            <person name="Nakano K."/>
            <person name="Ninomiya N."/>
            <person name="Nishio T."/>
            <person name="Okada M."/>
            <person name="Plessy C."/>
            <person name="Shibata K."/>
            <person name="Shiraki T."/>
            <person name="Suzuki S."/>
            <person name="Tagami M."/>
            <person name="Waki K."/>
            <person name="Watahiki A."/>
            <person name="Okamura-Oho Y."/>
            <person name="Suzuki H."/>
            <person name="Kawai J."/>
            <person name="Hayashizaki Y."/>
        </authorList>
    </citation>
    <scope>NUCLEOTIDE SEQUENCE [LARGE SCALE MRNA] (ISOFORMS 1 AND 3)</scope>
    <source>
        <strain>C57BL/6J</strain>
        <tissue>Testis</tissue>
    </source>
</reference>
<reference key="3">
    <citation type="journal article" date="2004" name="Genome Res.">
        <title>The status, quality, and expansion of the NIH full-length cDNA project: the Mammalian Gene Collection (MGC).</title>
        <authorList>
            <consortium name="The MGC Project Team"/>
        </authorList>
    </citation>
    <scope>NUCLEOTIDE SEQUENCE [LARGE SCALE MRNA] (ISOFORM 1)</scope>
    <source>
        <tissue>Brain</tissue>
    </source>
</reference>
<reference key="4">
    <citation type="journal article" date="2010" name="Cell">
        <title>A tissue-specific atlas of mouse protein phosphorylation and expression.</title>
        <authorList>
            <person name="Huttlin E.L."/>
            <person name="Jedrychowski M.P."/>
            <person name="Elias J.E."/>
            <person name="Goswami T."/>
            <person name="Rad R."/>
            <person name="Beausoleil S.A."/>
            <person name="Villen J."/>
            <person name="Haas W."/>
            <person name="Sowa M.E."/>
            <person name="Gygi S.P."/>
        </authorList>
    </citation>
    <scope>PHOSPHORYLATION [LARGE SCALE ANALYSIS] AT THR-54</scope>
    <scope>IDENTIFICATION BY MASS SPECTROMETRY [LARGE SCALE ANALYSIS]</scope>
    <source>
        <tissue>Testis</tissue>
    </source>
</reference>
<evidence type="ECO:0000250" key="1">
    <source>
        <dbReference type="UniProtKB" id="Q811V6"/>
    </source>
</evidence>
<evidence type="ECO:0000256" key="2">
    <source>
        <dbReference type="SAM" id="MobiDB-lite"/>
    </source>
</evidence>
<evidence type="ECO:0000303" key="3">
    <source>
    </source>
</evidence>
<evidence type="ECO:0000303" key="4">
    <source ref="1"/>
</evidence>
<evidence type="ECO:0000305" key="5"/>
<evidence type="ECO:0007744" key="6">
    <source>
    </source>
</evidence>
<organism>
    <name type="scientific">Mus musculus</name>
    <name type="common">Mouse</name>
    <dbReference type="NCBI Taxonomy" id="10090"/>
    <lineage>
        <taxon>Eukaryota</taxon>
        <taxon>Metazoa</taxon>
        <taxon>Chordata</taxon>
        <taxon>Craniata</taxon>
        <taxon>Vertebrata</taxon>
        <taxon>Euteleostomi</taxon>
        <taxon>Mammalia</taxon>
        <taxon>Eutheria</taxon>
        <taxon>Euarchontoglires</taxon>
        <taxon>Glires</taxon>
        <taxon>Rodentia</taxon>
        <taxon>Myomorpha</taxon>
        <taxon>Muroidea</taxon>
        <taxon>Muridae</taxon>
        <taxon>Murinae</taxon>
        <taxon>Mus</taxon>
        <taxon>Mus</taxon>
    </lineage>
</organism>
<proteinExistence type="evidence at protein level"/>
<gene>
    <name type="primary">Spats1</name>
    <name type="synonym">Ddip</name>
</gene>
<feature type="chain" id="PRO_0000307695" description="Spermatogenesis-associated serine-rich protein 1">
    <location>
        <begin position="1"/>
        <end position="269"/>
    </location>
</feature>
<feature type="region of interest" description="Disordered" evidence="2">
    <location>
        <begin position="1"/>
        <end position="92"/>
    </location>
</feature>
<feature type="compositionally biased region" description="Basic and acidic residues" evidence="2">
    <location>
        <begin position="1"/>
        <end position="14"/>
    </location>
</feature>
<feature type="compositionally biased region" description="Polar residues" evidence="2">
    <location>
        <begin position="18"/>
        <end position="38"/>
    </location>
</feature>
<feature type="compositionally biased region" description="Low complexity" evidence="2">
    <location>
        <begin position="67"/>
        <end position="86"/>
    </location>
</feature>
<feature type="modified residue" description="Phosphothreonine" evidence="6">
    <location>
        <position position="54"/>
    </location>
</feature>
<feature type="modified residue" description="Phosphoserine" evidence="1">
    <location>
        <position position="72"/>
    </location>
</feature>
<feature type="modified residue" description="Phosphoserine" evidence="1">
    <location>
        <position position="75"/>
    </location>
</feature>
<feature type="modified residue" description="Phosphoserine" evidence="1">
    <location>
        <position position="82"/>
    </location>
</feature>
<feature type="splice variant" id="VSP_028788" description="In isoform 3." evidence="3">
    <location>
        <begin position="202"/>
        <end position="222"/>
    </location>
</feature>
<feature type="splice variant" id="VSP_028789" description="In isoform 2 and isoform 3." evidence="3 4">
    <original>ASNFSRQQ</original>
    <variation>TGEMAPRLKVLAALPEGTSSVLSTQGRLTTPCSSSIRGSQTLFLPHRTSSHVLRTYTRTLHINKKP</variation>
    <location>
        <begin position="262"/>
        <end position="269"/>
    </location>
</feature>
<feature type="sequence conflict" description="In Ref. 2; BAB24285." evidence="5" ref="2">
    <original>EL</original>
    <variation>DV</variation>
    <location>
        <begin position="61"/>
        <end position="62"/>
    </location>
</feature>
<feature type="sequence conflict" description="In Ref. 2; BAB24285." evidence="5" ref="2">
    <original>I</original>
    <variation>D</variation>
    <location>
        <position position="90"/>
    </location>
</feature>
<feature type="sequence conflict" description="In Ref. 2; BAB24285." evidence="5" ref="2">
    <original>F</original>
    <variation>L</variation>
    <location>
        <position position="208"/>
    </location>
</feature>
<name>SPAS1_MOUSE</name>
<protein>
    <recommendedName>
        <fullName>Spermatogenesis-associated serine-rich protein 1</fullName>
    </recommendedName>
    <alternativeName>
        <fullName>Dvl2-DEP domain-interacting protein</fullName>
    </alternativeName>
</protein>
<dbReference type="EMBL" id="AY336501">
    <property type="protein sequence ID" value="AAQ88273.1"/>
    <property type="molecule type" value="mRNA"/>
</dbReference>
<dbReference type="EMBL" id="AK005865">
    <property type="protein sequence ID" value="BAB24285.1"/>
    <property type="molecule type" value="mRNA"/>
</dbReference>
<dbReference type="EMBL" id="AK016586">
    <property type="protein sequence ID" value="BAB30325.1"/>
    <property type="molecule type" value="mRNA"/>
</dbReference>
<dbReference type="EMBL" id="BC131909">
    <property type="protein sequence ID" value="AAI31910.1"/>
    <property type="molecule type" value="mRNA"/>
</dbReference>
<dbReference type="CCDS" id="CCDS50118.1">
    <molecule id="A2RRY8-1"/>
</dbReference>
<dbReference type="CCDS" id="CCDS89102.1">
    <molecule id="A2RRY8-3"/>
</dbReference>
<dbReference type="CCDS" id="CCDS89103.1">
    <molecule id="A2RRY8-2"/>
</dbReference>
<dbReference type="RefSeq" id="NP_001344760.1">
    <molecule id="A2RRY8-2"/>
    <property type="nucleotide sequence ID" value="NM_001357831.1"/>
</dbReference>
<dbReference type="RefSeq" id="NP_001344761.1">
    <molecule id="A2RRY8-3"/>
    <property type="nucleotide sequence ID" value="NM_001357832.1"/>
</dbReference>
<dbReference type="RefSeq" id="NP_081925.2">
    <molecule id="A2RRY8-1"/>
    <property type="nucleotide sequence ID" value="NM_027649.3"/>
</dbReference>
<dbReference type="RefSeq" id="XP_006524978.1">
    <property type="nucleotide sequence ID" value="XM_006524915.2"/>
</dbReference>
<dbReference type="RefSeq" id="XP_006524980.1">
    <property type="nucleotide sequence ID" value="XM_006524917.2"/>
</dbReference>
<dbReference type="BioGRID" id="214418">
    <property type="interactions" value="6"/>
</dbReference>
<dbReference type="FunCoup" id="A2RRY8">
    <property type="interactions" value="12"/>
</dbReference>
<dbReference type="STRING" id="10090.ENSMUSP00000024731"/>
<dbReference type="iPTMnet" id="A2RRY8"/>
<dbReference type="PhosphoSitePlus" id="A2RRY8"/>
<dbReference type="PaxDb" id="10090-ENSMUSP00000024731"/>
<dbReference type="ProteomicsDB" id="261563">
    <molecule id="A2RRY8-1"/>
</dbReference>
<dbReference type="ProteomicsDB" id="261564">
    <molecule id="A2RRY8-2"/>
</dbReference>
<dbReference type="ProteomicsDB" id="261565">
    <molecule id="A2RRY8-3"/>
</dbReference>
<dbReference type="Antibodypedia" id="56365">
    <property type="antibodies" value="106 antibodies from 19 providers"/>
</dbReference>
<dbReference type="Ensembl" id="ENSMUST00000024731.9">
    <molecule id="A2RRY8-1"/>
    <property type="protein sequence ID" value="ENSMUSP00000024731.9"/>
    <property type="gene ID" value="ENSMUSG00000023935.11"/>
</dbReference>
<dbReference type="Ensembl" id="ENSMUST00000233553.2">
    <molecule id="A2RRY8-2"/>
    <property type="protein sequence ID" value="ENSMUSP00000156716.2"/>
    <property type="gene ID" value="ENSMUSG00000023935.11"/>
</dbReference>
<dbReference type="Ensembl" id="ENSMUST00000233769.2">
    <molecule id="A2RRY8-3"/>
    <property type="protein sequence ID" value="ENSMUSP00000156469.2"/>
    <property type="gene ID" value="ENSMUSG00000023935.11"/>
</dbReference>
<dbReference type="GeneID" id="71020"/>
<dbReference type="KEGG" id="mmu:71020"/>
<dbReference type="UCSC" id="uc008cqn.1">
    <molecule id="A2RRY8-2"/>
    <property type="organism name" value="mouse"/>
</dbReference>
<dbReference type="UCSC" id="uc008cqo.1">
    <molecule id="A2RRY8-3"/>
    <property type="organism name" value="mouse"/>
</dbReference>
<dbReference type="UCSC" id="uc008cqp.1">
    <molecule id="A2RRY8-1"/>
    <property type="organism name" value="mouse"/>
</dbReference>
<dbReference type="AGR" id="MGI:1918270"/>
<dbReference type="CTD" id="221409"/>
<dbReference type="MGI" id="MGI:1918270">
    <property type="gene designation" value="Spats1"/>
</dbReference>
<dbReference type="VEuPathDB" id="HostDB:ENSMUSG00000023935"/>
<dbReference type="eggNOG" id="ENOG502S39M">
    <property type="taxonomic scope" value="Eukaryota"/>
</dbReference>
<dbReference type="GeneTree" id="ENSGT00390000006786"/>
<dbReference type="HOGENOM" id="CLU_081878_0_0_1"/>
<dbReference type="InParanoid" id="A2RRY8"/>
<dbReference type="OMA" id="NNIHTYH"/>
<dbReference type="PhylomeDB" id="A2RRY8"/>
<dbReference type="TreeFam" id="TF337302"/>
<dbReference type="BioGRID-ORCS" id="71020">
    <property type="hits" value="1 hit in 76 CRISPR screens"/>
</dbReference>
<dbReference type="ChiTaRS" id="Spats1">
    <property type="organism name" value="mouse"/>
</dbReference>
<dbReference type="PRO" id="PR:A2RRY8"/>
<dbReference type="Proteomes" id="UP000000589">
    <property type="component" value="Chromosome 17"/>
</dbReference>
<dbReference type="RNAct" id="A2RRY8">
    <property type="molecule type" value="protein"/>
</dbReference>
<dbReference type="Bgee" id="ENSMUSG00000023935">
    <property type="expression patterns" value="Expressed in spermatocyte and 60 other cell types or tissues"/>
</dbReference>
<dbReference type="InterPro" id="IPR029165">
    <property type="entry name" value="SASRP1"/>
</dbReference>
<dbReference type="PANTHER" id="PTHR35845">
    <property type="entry name" value="SPERMATOGENESIS-ASSOCIATED SERINE-RICH PROTEIN 1"/>
    <property type="match status" value="1"/>
</dbReference>
<dbReference type="PANTHER" id="PTHR35845:SF1">
    <property type="entry name" value="SPERMATOGENESIS-ASSOCIATED SERINE-RICH PROTEIN 1"/>
    <property type="match status" value="1"/>
</dbReference>
<dbReference type="Pfam" id="PF15160">
    <property type="entry name" value="SASRP1"/>
    <property type="match status" value="1"/>
</dbReference>
<keyword id="KW-0025">Alternative splicing</keyword>
<keyword id="KW-0597">Phosphoprotein</keyword>
<keyword id="KW-1185">Reference proteome</keyword>
<comment type="alternative products">
    <event type="alternative splicing"/>
    <isoform>
        <id>A2RRY8-1</id>
        <name>1</name>
        <sequence type="displayed"/>
    </isoform>
    <isoform>
        <id>A2RRY8-2</id>
        <name>2</name>
        <sequence type="described" ref="VSP_028789"/>
    </isoform>
    <isoform>
        <id>A2RRY8-3</id>
        <name>3</name>
        <sequence type="described" ref="VSP_028788 VSP_028789"/>
    </isoform>
</comment>
<accession>A2RRY8</accession>
<accession>Q6VNB9</accession>
<accession>Q9CUD9</accession>
<accession>Q9DAG2</accession>